<keyword id="KW-0903">Direct protein sequencing</keyword>
<keyword id="KW-1015">Disulfide bond</keyword>
<keyword id="KW-0325">Glycoprotein</keyword>
<keyword id="KW-0393">Immunoglobulin domain</keyword>
<keyword id="KW-0481">Metalloenzyme inhibitor</keyword>
<keyword id="KW-0483">Metalloprotease inhibitor</keyword>
<keyword id="KW-0646">Protease inhibitor</keyword>
<keyword id="KW-0677">Repeat</keyword>
<name>DM43_DIDMR</name>
<accession>P82957</accession>
<reference key="1">
    <citation type="journal article" date="2002" name="J. Biol. Chem.">
        <title>Structural and functional analyses of DM43, a snake venom metalloproteinase inhibitor from Didelphis marsupialis serum.</title>
        <authorList>
            <person name="Neves-Ferreira A.G.C."/>
            <person name="Perales J."/>
            <person name="Fox J.W."/>
            <person name="Shannon J.D."/>
            <person name="Makino D.L."/>
            <person name="Garratt R.C."/>
            <person name="Domont G.B."/>
        </authorList>
    </citation>
    <scope>PROTEIN SEQUENCE</scope>
    <scope>MASS SPECTROMETRY</scope>
    <scope>GLYCOSYLATION AT ASN-23; ASN-156; ASN-160 AND ASN-175</scope>
    <source>
        <tissue>Serum</tissue>
    </source>
</reference>
<organism>
    <name type="scientific">Didelphis marsupialis</name>
    <name type="common">Southern opossum</name>
    <dbReference type="NCBI Taxonomy" id="9268"/>
    <lineage>
        <taxon>Eukaryota</taxon>
        <taxon>Metazoa</taxon>
        <taxon>Chordata</taxon>
        <taxon>Craniata</taxon>
        <taxon>Vertebrata</taxon>
        <taxon>Euteleostomi</taxon>
        <taxon>Mammalia</taxon>
        <taxon>Metatheria</taxon>
        <taxon>Didelphimorphia</taxon>
        <taxon>Didelphidae</taxon>
        <taxon>Didelphis</taxon>
    </lineage>
</organism>
<proteinExistence type="evidence at protein level"/>
<feature type="chain" id="PRO_0000072680" description="Venom metalloproteinase inhibitor DM43">
    <location>
        <begin position="1"/>
        <end position="291"/>
    </location>
</feature>
<feature type="domain" description="Ig-like V-type 1">
    <location>
        <begin position="22"/>
        <end position="79"/>
    </location>
</feature>
<feature type="domain" description="Ig-like V-type 2">
    <location>
        <begin position="114"/>
        <end position="171"/>
    </location>
</feature>
<feature type="domain" description="Ig-like V-type 3">
    <location>
        <begin position="191"/>
        <end position="288"/>
    </location>
</feature>
<feature type="glycosylation site" description="N-linked (GlcNAc...) asparagine" evidence="2">
    <location>
        <position position="23"/>
    </location>
</feature>
<feature type="glycosylation site" description="N-linked (GlcNAc...) asparagine" evidence="2">
    <location>
        <position position="156"/>
    </location>
</feature>
<feature type="glycosylation site" description="N-linked (GlcNAc...) asparagine" evidence="2">
    <location>
        <position position="160"/>
    </location>
</feature>
<feature type="glycosylation site" description="N-linked (GlcNAc...) asparagine" evidence="2">
    <location>
        <position position="175"/>
    </location>
</feature>
<feature type="disulfide bond" evidence="1">
    <location>
        <begin position="28"/>
        <end position="74"/>
    </location>
</feature>
<feature type="disulfide bond">
    <location>
        <begin position="121"/>
        <end position="163"/>
    </location>
</feature>
<feature type="disulfide bond">
    <location>
        <begin position="213"/>
        <end position="265"/>
    </location>
</feature>
<comment type="function">
    <text>Metalloproteinase inhibitor.</text>
</comment>
<comment type="subunit">
    <text>Homodimer.</text>
</comment>
<comment type="tissue specificity">
    <text>Blood and milk.</text>
</comment>
<comment type="PTM">
    <text>N-glycosylated.</text>
</comment>
<comment type="mass spectrometry"/>
<protein>
    <recommendedName>
        <fullName>Venom metalloproteinase inhibitor DM43</fullName>
    </recommendedName>
</protein>
<evidence type="ECO:0000255" key="1">
    <source>
        <dbReference type="PROSITE-ProRule" id="PRU00114"/>
    </source>
</evidence>
<evidence type="ECO:0000269" key="2">
    <source>
    </source>
</evidence>
<dbReference type="SMR" id="P82957"/>
<dbReference type="MEROPS" id="I43.001"/>
<dbReference type="iPTMnet" id="P82957"/>
<dbReference type="GO" id="GO:0005886">
    <property type="term" value="C:plasma membrane"/>
    <property type="evidence" value="ECO:0007669"/>
    <property type="project" value="TreeGrafter"/>
</dbReference>
<dbReference type="GO" id="GO:0030414">
    <property type="term" value="F:peptidase inhibitor activity"/>
    <property type="evidence" value="ECO:0007669"/>
    <property type="project" value="UniProtKB-KW"/>
</dbReference>
<dbReference type="GO" id="GO:0002764">
    <property type="term" value="P:immune response-regulating signaling pathway"/>
    <property type="evidence" value="ECO:0007669"/>
    <property type="project" value="TreeGrafter"/>
</dbReference>
<dbReference type="FunFam" id="2.60.40.10:FF:000033">
    <property type="entry name" value="Killer cell immunoglobulin-like receptor"/>
    <property type="match status" value="3"/>
</dbReference>
<dbReference type="Gene3D" id="2.60.40.10">
    <property type="entry name" value="Immunoglobulins"/>
    <property type="match status" value="3"/>
</dbReference>
<dbReference type="InterPro" id="IPR007110">
    <property type="entry name" value="Ig-like_dom"/>
</dbReference>
<dbReference type="InterPro" id="IPR036179">
    <property type="entry name" value="Ig-like_dom_sf"/>
</dbReference>
<dbReference type="InterPro" id="IPR013783">
    <property type="entry name" value="Ig-like_fold"/>
</dbReference>
<dbReference type="InterPro" id="IPR050412">
    <property type="entry name" value="Ig-like_Receptors_ImmuneReg"/>
</dbReference>
<dbReference type="PANTHER" id="PTHR11738">
    <property type="entry name" value="MHC CLASS I NK CELL RECEPTOR"/>
    <property type="match status" value="1"/>
</dbReference>
<dbReference type="PANTHER" id="PTHR11738:SF186">
    <property type="entry name" value="OSTEOCLAST-ASSOCIATED IMMUNOGLOBULIN-LIKE RECEPTOR"/>
    <property type="match status" value="1"/>
</dbReference>
<dbReference type="SUPFAM" id="SSF48726">
    <property type="entry name" value="Immunoglobulin"/>
    <property type="match status" value="3"/>
</dbReference>
<dbReference type="PROSITE" id="PS50835">
    <property type="entry name" value="IG_LIKE"/>
    <property type="match status" value="1"/>
</dbReference>
<sequence>LKAMDPTPPLWIKTESPSTPWTNVTLLCVATNTEELSFQVWKDGELLSTLPVVGLVGKFWLGPVTADNRGIYRCRILTSENDWTPLSAPVEVTGKEPLPAPSLHAEPGPWILPGLETKLHCRGMLLGMIFDLYQEGEQEPVKSSQTPSAEATFIVNSTGNYSCLYRAPASAPSVNSTPSETIHVVIPDFLPKANFYILNDRDFRPGDIVTFSCWARFSEREYDLEFKLFKDGQETPVEVVPISDPMKVFFDLTAVGPKDGGKYSCRYRFRNGPPIWSEDSNVLELDLSTGQ</sequence>